<name>GCH1_XYLFA</name>
<reference key="1">
    <citation type="journal article" date="2000" name="Nature">
        <title>The genome sequence of the plant pathogen Xylella fastidiosa.</title>
        <authorList>
            <person name="Simpson A.J.G."/>
            <person name="Reinach F.C."/>
            <person name="Arruda P."/>
            <person name="Abreu F.A."/>
            <person name="Acencio M."/>
            <person name="Alvarenga R."/>
            <person name="Alves L.M.C."/>
            <person name="Araya J.E."/>
            <person name="Baia G.S."/>
            <person name="Baptista C.S."/>
            <person name="Barros M.H."/>
            <person name="Bonaccorsi E.D."/>
            <person name="Bordin S."/>
            <person name="Bove J.M."/>
            <person name="Briones M.R.S."/>
            <person name="Bueno M.R.P."/>
            <person name="Camargo A.A."/>
            <person name="Camargo L.E.A."/>
            <person name="Carraro D.M."/>
            <person name="Carrer H."/>
            <person name="Colauto N.B."/>
            <person name="Colombo C."/>
            <person name="Costa F.F."/>
            <person name="Costa M.C.R."/>
            <person name="Costa-Neto C.M."/>
            <person name="Coutinho L.L."/>
            <person name="Cristofani M."/>
            <person name="Dias-Neto E."/>
            <person name="Docena C."/>
            <person name="El-Dorry H."/>
            <person name="Facincani A.P."/>
            <person name="Ferreira A.J.S."/>
            <person name="Ferreira V.C.A."/>
            <person name="Ferro J.A."/>
            <person name="Fraga J.S."/>
            <person name="Franca S.C."/>
            <person name="Franco M.C."/>
            <person name="Frohme M."/>
            <person name="Furlan L.R."/>
            <person name="Garnier M."/>
            <person name="Goldman G.H."/>
            <person name="Goldman M.H.S."/>
            <person name="Gomes S.L."/>
            <person name="Gruber A."/>
            <person name="Ho P.L."/>
            <person name="Hoheisel J.D."/>
            <person name="Junqueira M.L."/>
            <person name="Kemper E.L."/>
            <person name="Kitajima J.P."/>
            <person name="Krieger J.E."/>
            <person name="Kuramae E.E."/>
            <person name="Laigret F."/>
            <person name="Lambais M.R."/>
            <person name="Leite L.C.C."/>
            <person name="Lemos E.G.M."/>
            <person name="Lemos M.V.F."/>
            <person name="Lopes S.A."/>
            <person name="Lopes C.R."/>
            <person name="Machado J.A."/>
            <person name="Machado M.A."/>
            <person name="Madeira A.M.B.N."/>
            <person name="Madeira H.M.F."/>
            <person name="Marino C.L."/>
            <person name="Marques M.V."/>
            <person name="Martins E.A.L."/>
            <person name="Martins E.M.F."/>
            <person name="Matsukuma A.Y."/>
            <person name="Menck C.F.M."/>
            <person name="Miracca E.C."/>
            <person name="Miyaki C.Y."/>
            <person name="Monteiro-Vitorello C.B."/>
            <person name="Moon D.H."/>
            <person name="Nagai M.A."/>
            <person name="Nascimento A.L.T.O."/>
            <person name="Netto L.E.S."/>
            <person name="Nhani A. Jr."/>
            <person name="Nobrega F.G."/>
            <person name="Nunes L.R."/>
            <person name="Oliveira M.A."/>
            <person name="de Oliveira M.C."/>
            <person name="de Oliveira R.C."/>
            <person name="Palmieri D.A."/>
            <person name="Paris A."/>
            <person name="Peixoto B.R."/>
            <person name="Pereira G.A.G."/>
            <person name="Pereira H.A. Jr."/>
            <person name="Pesquero J.B."/>
            <person name="Quaggio R.B."/>
            <person name="Roberto P.G."/>
            <person name="Rodrigues V."/>
            <person name="de Rosa A.J.M."/>
            <person name="de Rosa V.E. Jr."/>
            <person name="de Sa R.G."/>
            <person name="Santelli R.V."/>
            <person name="Sawasaki H.E."/>
            <person name="da Silva A.C.R."/>
            <person name="da Silva A.M."/>
            <person name="da Silva F.R."/>
            <person name="Silva W.A. Jr."/>
            <person name="da Silveira J.F."/>
            <person name="Silvestri M.L.Z."/>
            <person name="Siqueira W.J."/>
            <person name="de Souza A.A."/>
            <person name="de Souza A.P."/>
            <person name="Terenzi M.F."/>
            <person name="Truffi D."/>
            <person name="Tsai S.M."/>
            <person name="Tsuhako M.H."/>
            <person name="Vallada H."/>
            <person name="Van Sluys M.A."/>
            <person name="Verjovski-Almeida S."/>
            <person name="Vettore A.L."/>
            <person name="Zago M.A."/>
            <person name="Zatz M."/>
            <person name="Meidanis J."/>
            <person name="Setubal J.C."/>
        </authorList>
    </citation>
    <scope>NUCLEOTIDE SEQUENCE [LARGE SCALE GENOMIC DNA]</scope>
    <source>
        <strain>9a5c</strain>
    </source>
</reference>
<keyword id="KW-0342">GTP-binding</keyword>
<keyword id="KW-0378">Hydrolase</keyword>
<keyword id="KW-0479">Metal-binding</keyword>
<keyword id="KW-0547">Nucleotide-binding</keyword>
<keyword id="KW-0554">One-carbon metabolism</keyword>
<keyword id="KW-0862">Zinc</keyword>
<gene>
    <name evidence="2" type="primary">folE</name>
    <name type="ordered locus">XF_1983</name>
</gene>
<evidence type="ECO:0000250" key="1"/>
<evidence type="ECO:0000255" key="2">
    <source>
        <dbReference type="HAMAP-Rule" id="MF_00223"/>
    </source>
</evidence>
<evidence type="ECO:0000305" key="3"/>
<protein>
    <recommendedName>
        <fullName evidence="2">GTP cyclohydrolase 1</fullName>
        <ecNumber evidence="2">3.5.4.16</ecNumber>
    </recommendedName>
    <alternativeName>
        <fullName evidence="2">GTP cyclohydrolase I</fullName>
        <shortName evidence="2">GTP-CH-I</shortName>
    </alternativeName>
</protein>
<proteinExistence type="inferred from homology"/>
<dbReference type="EC" id="3.5.4.16" evidence="2"/>
<dbReference type="EMBL" id="AE003849">
    <property type="protein sequence ID" value="AAF84785.1"/>
    <property type="status" value="ALT_INIT"/>
    <property type="molecule type" value="Genomic_DNA"/>
</dbReference>
<dbReference type="PIR" id="B82613">
    <property type="entry name" value="B82613"/>
</dbReference>
<dbReference type="RefSeq" id="WP_031336534.1">
    <property type="nucleotide sequence ID" value="NC_002488.3"/>
</dbReference>
<dbReference type="SMR" id="Q9PC02"/>
<dbReference type="STRING" id="160492.XF_1983"/>
<dbReference type="KEGG" id="xfa:XF_1983"/>
<dbReference type="eggNOG" id="COG0302">
    <property type="taxonomic scope" value="Bacteria"/>
</dbReference>
<dbReference type="HOGENOM" id="CLU_049768_3_1_6"/>
<dbReference type="UniPathway" id="UPA00848">
    <property type="reaction ID" value="UER00151"/>
</dbReference>
<dbReference type="Proteomes" id="UP000000812">
    <property type="component" value="Chromosome"/>
</dbReference>
<dbReference type="GO" id="GO:0005737">
    <property type="term" value="C:cytoplasm"/>
    <property type="evidence" value="ECO:0007669"/>
    <property type="project" value="TreeGrafter"/>
</dbReference>
<dbReference type="GO" id="GO:0005525">
    <property type="term" value="F:GTP binding"/>
    <property type="evidence" value="ECO:0007669"/>
    <property type="project" value="UniProtKB-KW"/>
</dbReference>
<dbReference type="GO" id="GO:0003934">
    <property type="term" value="F:GTP cyclohydrolase I activity"/>
    <property type="evidence" value="ECO:0007669"/>
    <property type="project" value="UniProtKB-UniRule"/>
</dbReference>
<dbReference type="GO" id="GO:0008270">
    <property type="term" value="F:zinc ion binding"/>
    <property type="evidence" value="ECO:0007669"/>
    <property type="project" value="UniProtKB-UniRule"/>
</dbReference>
<dbReference type="GO" id="GO:0006730">
    <property type="term" value="P:one-carbon metabolic process"/>
    <property type="evidence" value="ECO:0007669"/>
    <property type="project" value="UniProtKB-UniRule"/>
</dbReference>
<dbReference type="GO" id="GO:0006729">
    <property type="term" value="P:tetrahydrobiopterin biosynthetic process"/>
    <property type="evidence" value="ECO:0007669"/>
    <property type="project" value="TreeGrafter"/>
</dbReference>
<dbReference type="GO" id="GO:0046654">
    <property type="term" value="P:tetrahydrofolate biosynthetic process"/>
    <property type="evidence" value="ECO:0007669"/>
    <property type="project" value="UniProtKB-UniRule"/>
</dbReference>
<dbReference type="FunFam" id="1.10.286.10:FF:000001">
    <property type="entry name" value="GTP cyclohydrolase 1"/>
    <property type="match status" value="1"/>
</dbReference>
<dbReference type="FunFam" id="3.30.1130.10:FF:000001">
    <property type="entry name" value="GTP cyclohydrolase 1"/>
    <property type="match status" value="1"/>
</dbReference>
<dbReference type="Gene3D" id="1.10.286.10">
    <property type="match status" value="1"/>
</dbReference>
<dbReference type="Gene3D" id="3.30.1130.10">
    <property type="match status" value="1"/>
</dbReference>
<dbReference type="HAMAP" id="MF_00223">
    <property type="entry name" value="FolE"/>
    <property type="match status" value="1"/>
</dbReference>
<dbReference type="InterPro" id="IPR043133">
    <property type="entry name" value="GTP-CH-I_C/QueF"/>
</dbReference>
<dbReference type="InterPro" id="IPR043134">
    <property type="entry name" value="GTP-CH-I_N"/>
</dbReference>
<dbReference type="InterPro" id="IPR001474">
    <property type="entry name" value="GTP_CycHdrlase_I"/>
</dbReference>
<dbReference type="InterPro" id="IPR018234">
    <property type="entry name" value="GTP_CycHdrlase_I_CS"/>
</dbReference>
<dbReference type="InterPro" id="IPR020602">
    <property type="entry name" value="GTP_CycHdrlase_I_dom"/>
</dbReference>
<dbReference type="NCBIfam" id="TIGR00063">
    <property type="entry name" value="folE"/>
    <property type="match status" value="1"/>
</dbReference>
<dbReference type="NCBIfam" id="NF006825">
    <property type="entry name" value="PRK09347.1-2"/>
    <property type="match status" value="1"/>
</dbReference>
<dbReference type="NCBIfam" id="NF006826">
    <property type="entry name" value="PRK09347.1-3"/>
    <property type="match status" value="1"/>
</dbReference>
<dbReference type="PANTHER" id="PTHR11109:SF7">
    <property type="entry name" value="GTP CYCLOHYDROLASE 1"/>
    <property type="match status" value="1"/>
</dbReference>
<dbReference type="PANTHER" id="PTHR11109">
    <property type="entry name" value="GTP CYCLOHYDROLASE I"/>
    <property type="match status" value="1"/>
</dbReference>
<dbReference type="Pfam" id="PF01227">
    <property type="entry name" value="GTP_cyclohydroI"/>
    <property type="match status" value="1"/>
</dbReference>
<dbReference type="SUPFAM" id="SSF55620">
    <property type="entry name" value="Tetrahydrobiopterin biosynthesis enzymes-like"/>
    <property type="match status" value="1"/>
</dbReference>
<dbReference type="PROSITE" id="PS00859">
    <property type="entry name" value="GTP_CYCLOHYDROL_1_1"/>
    <property type="match status" value="1"/>
</dbReference>
<dbReference type="PROSITE" id="PS00860">
    <property type="entry name" value="GTP_CYCLOHYDROL_1_2"/>
    <property type="match status" value="1"/>
</dbReference>
<organism>
    <name type="scientific">Xylella fastidiosa (strain 9a5c)</name>
    <dbReference type="NCBI Taxonomy" id="160492"/>
    <lineage>
        <taxon>Bacteria</taxon>
        <taxon>Pseudomonadati</taxon>
        <taxon>Pseudomonadota</taxon>
        <taxon>Gammaproteobacteria</taxon>
        <taxon>Lysobacterales</taxon>
        <taxon>Lysobacteraceae</taxon>
        <taxon>Xylella</taxon>
    </lineage>
</organism>
<sequence>MDHSKQQNASITQAQAEEAVRTLLRWAGEDPTREGLLDTPRRVVEAYGDWFSGYREDPHDYLQRTFEEISGYDELIVLRNITYESHCEHHMAPIIGKVHIGYLPNGKVVGISKLARVVESYARRFQIQEKMTAQIAACIQETLTPRGVGVVIEGAHACMTTRGIHKRGVSMVTSKMLGTFREDARTRAEFLQFIEVGTNVMDL</sequence>
<feature type="chain" id="PRO_0000119468" description="GTP cyclohydrolase 1">
    <location>
        <begin position="1"/>
        <end position="203"/>
    </location>
</feature>
<feature type="binding site" evidence="2">
    <location>
        <position position="87"/>
    </location>
    <ligand>
        <name>Zn(2+)</name>
        <dbReference type="ChEBI" id="CHEBI:29105"/>
    </ligand>
</feature>
<feature type="binding site" evidence="2">
    <location>
        <position position="90"/>
    </location>
    <ligand>
        <name>Zn(2+)</name>
        <dbReference type="ChEBI" id="CHEBI:29105"/>
    </ligand>
</feature>
<feature type="binding site" evidence="2">
    <location>
        <position position="158"/>
    </location>
    <ligand>
        <name>Zn(2+)</name>
        <dbReference type="ChEBI" id="CHEBI:29105"/>
    </ligand>
</feature>
<accession>Q9PC02</accession>
<comment type="catalytic activity">
    <reaction evidence="2">
        <text>GTP + H2O = 7,8-dihydroneopterin 3'-triphosphate + formate + H(+)</text>
        <dbReference type="Rhea" id="RHEA:17473"/>
        <dbReference type="ChEBI" id="CHEBI:15377"/>
        <dbReference type="ChEBI" id="CHEBI:15378"/>
        <dbReference type="ChEBI" id="CHEBI:15740"/>
        <dbReference type="ChEBI" id="CHEBI:37565"/>
        <dbReference type="ChEBI" id="CHEBI:58462"/>
        <dbReference type="EC" id="3.5.4.16"/>
    </reaction>
</comment>
<comment type="pathway">
    <text evidence="2">Cofactor biosynthesis; 7,8-dihydroneopterin triphosphate biosynthesis; 7,8-dihydroneopterin triphosphate from GTP: step 1/1.</text>
</comment>
<comment type="subunit">
    <text evidence="1">Toroid-shaped homodecamer, composed of two pentamers of five dimers.</text>
</comment>
<comment type="similarity">
    <text evidence="2">Belongs to the GTP cyclohydrolase I family.</text>
</comment>
<comment type="sequence caution" evidence="3">
    <conflict type="erroneous initiation">
        <sequence resource="EMBL-CDS" id="AAF84785"/>
    </conflict>
</comment>